<protein>
    <recommendedName>
        <fullName evidence="1">Peptidase E</fullName>
        <ecNumber evidence="1">3.4.13.21</ecNumber>
    </recommendedName>
    <alternativeName>
        <fullName evidence="1">Alpha-aspartyl dipeptidase</fullName>
    </alternativeName>
    <alternativeName>
        <fullName evidence="1">Asp-specific dipeptidase</fullName>
    </alternativeName>
    <alternativeName>
        <fullName evidence="1">Dipeptidase E</fullName>
    </alternativeName>
</protein>
<sequence>MKNMLLMSGSKYQNTDYLVHTLPWLQDFLADYQGKTVAFVPYAGVRQSYDEYELKVQKALAELNVAILSVHRAEKHAEIIEKADVIAIGGGNTFCLLKGMYEHHLLPLIREKVQSGTPYFGWSAGANVAGRSIMTTNDMPITYPPSFDALNLFPHQLNPHFISGKPAGHNGESREERLAEFLIVNPTANVYALPEGTALHIQGQQARVLGQHDVLLFSENMQLATLPVNSVFDY</sequence>
<evidence type="ECO:0000255" key="1">
    <source>
        <dbReference type="HAMAP-Rule" id="MF_00510"/>
    </source>
</evidence>
<evidence type="ECO:0000305" key="2"/>
<keyword id="KW-0963">Cytoplasm</keyword>
<keyword id="KW-0224">Dipeptidase</keyword>
<keyword id="KW-0378">Hydrolase</keyword>
<keyword id="KW-0645">Protease</keyword>
<keyword id="KW-1185">Reference proteome</keyword>
<keyword id="KW-0720">Serine protease</keyword>
<reference key="1">
    <citation type="journal article" date="2001" name="Proc. Natl. Acad. Sci. U.S.A.">
        <title>Complete genomic sequence of Pasteurella multocida Pm70.</title>
        <authorList>
            <person name="May B.J."/>
            <person name="Zhang Q."/>
            <person name="Li L.L."/>
            <person name="Paustian M.L."/>
            <person name="Whittam T.S."/>
            <person name="Kapur V."/>
        </authorList>
    </citation>
    <scope>NUCLEOTIDE SEQUENCE [LARGE SCALE GENOMIC DNA]</scope>
    <source>
        <strain>Pm70</strain>
    </source>
</reference>
<organism>
    <name type="scientific">Pasteurella multocida (strain Pm70)</name>
    <dbReference type="NCBI Taxonomy" id="272843"/>
    <lineage>
        <taxon>Bacteria</taxon>
        <taxon>Pseudomonadati</taxon>
        <taxon>Pseudomonadota</taxon>
        <taxon>Gammaproteobacteria</taxon>
        <taxon>Pasteurellales</taxon>
        <taxon>Pasteurellaceae</taxon>
        <taxon>Pasteurella</taxon>
    </lineage>
</organism>
<feature type="chain" id="PRO_0000209959" description="Peptidase E">
    <location>
        <begin position="1"/>
        <end position="234"/>
    </location>
</feature>
<feature type="active site" description="Charge relay system" evidence="1">
    <location>
        <position position="123"/>
    </location>
</feature>
<feature type="active site" description="Charge relay system" evidence="1">
    <location>
        <position position="138"/>
    </location>
</feature>
<feature type="active site" description="Charge relay system" evidence="1">
    <location>
        <position position="160"/>
    </location>
</feature>
<proteinExistence type="inferred from homology"/>
<dbReference type="EC" id="3.4.13.21" evidence="1"/>
<dbReference type="EMBL" id="AE004439">
    <property type="protein sequence ID" value="AAK02538.1"/>
    <property type="status" value="ALT_INIT"/>
    <property type="molecule type" value="Genomic_DNA"/>
</dbReference>
<dbReference type="RefSeq" id="WP_005721773.1">
    <property type="nucleotide sequence ID" value="NC_002663.1"/>
</dbReference>
<dbReference type="SMR" id="Q9CNH7"/>
<dbReference type="STRING" id="272843.PM0454"/>
<dbReference type="MEROPS" id="S51.001"/>
<dbReference type="EnsemblBacteria" id="AAK02538">
    <property type="protein sequence ID" value="AAK02538"/>
    <property type="gene ID" value="PM0454"/>
</dbReference>
<dbReference type="GeneID" id="77206062"/>
<dbReference type="KEGG" id="pmu:PM0454"/>
<dbReference type="HOGENOM" id="CLU_071689_0_0_6"/>
<dbReference type="OrthoDB" id="3373764at2"/>
<dbReference type="Proteomes" id="UP000000809">
    <property type="component" value="Chromosome"/>
</dbReference>
<dbReference type="GO" id="GO:0005737">
    <property type="term" value="C:cytoplasm"/>
    <property type="evidence" value="ECO:0007669"/>
    <property type="project" value="UniProtKB-SubCell"/>
</dbReference>
<dbReference type="GO" id="GO:0016805">
    <property type="term" value="F:dipeptidase activity"/>
    <property type="evidence" value="ECO:0007669"/>
    <property type="project" value="UniProtKB-UniRule"/>
</dbReference>
<dbReference type="GO" id="GO:0008236">
    <property type="term" value="F:serine-type peptidase activity"/>
    <property type="evidence" value="ECO:0007669"/>
    <property type="project" value="UniProtKB-KW"/>
</dbReference>
<dbReference type="GO" id="GO:0006508">
    <property type="term" value="P:proteolysis"/>
    <property type="evidence" value="ECO:0007669"/>
    <property type="project" value="UniProtKB-UniRule"/>
</dbReference>
<dbReference type="CDD" id="cd03146">
    <property type="entry name" value="GAT1_Peptidase_E"/>
    <property type="match status" value="1"/>
</dbReference>
<dbReference type="FunFam" id="3.40.50.880:FF:000007">
    <property type="entry name" value="Peptidase E"/>
    <property type="match status" value="1"/>
</dbReference>
<dbReference type="Gene3D" id="3.40.50.880">
    <property type="match status" value="1"/>
</dbReference>
<dbReference type="HAMAP" id="MF_00510">
    <property type="entry name" value="Peptidase_E"/>
    <property type="match status" value="1"/>
</dbReference>
<dbReference type="InterPro" id="IPR029062">
    <property type="entry name" value="Class_I_gatase-like"/>
</dbReference>
<dbReference type="InterPro" id="IPR005320">
    <property type="entry name" value="Peptidase_S51"/>
</dbReference>
<dbReference type="InterPro" id="IPR023172">
    <property type="entry name" value="Peptidase_S51_dipeptidase-E"/>
</dbReference>
<dbReference type="NCBIfam" id="NF003642">
    <property type="entry name" value="PRK05282.1"/>
    <property type="match status" value="1"/>
</dbReference>
<dbReference type="PANTHER" id="PTHR20842:SF0">
    <property type="entry name" value="ALPHA-ASPARTYL DIPEPTIDASE"/>
    <property type="match status" value="1"/>
</dbReference>
<dbReference type="PANTHER" id="PTHR20842">
    <property type="entry name" value="PROTEASE S51 ALPHA-ASPARTYL DIPEPTIDASE"/>
    <property type="match status" value="1"/>
</dbReference>
<dbReference type="Pfam" id="PF03575">
    <property type="entry name" value="Peptidase_S51"/>
    <property type="match status" value="1"/>
</dbReference>
<dbReference type="SUPFAM" id="SSF52317">
    <property type="entry name" value="Class I glutamine amidotransferase-like"/>
    <property type="match status" value="1"/>
</dbReference>
<accession>Q9CNH7</accession>
<comment type="function">
    <text evidence="1">Hydrolyzes dipeptides containing N-terminal aspartate residues. May play a role in allowing the cell to use peptide aspartate to spare carbon otherwise required for the synthesis of the aspartate family of amino acids.</text>
</comment>
<comment type="catalytic activity">
    <reaction evidence="1">
        <text>Dipeptidase E catalyzes the hydrolysis of dipeptides Asp-|-Xaa. It does not act on peptides with N-terminal Glu, Asn or Gln, nor does it cleave isoaspartyl peptides.</text>
        <dbReference type="EC" id="3.4.13.21"/>
    </reaction>
</comment>
<comment type="subcellular location">
    <subcellularLocation>
        <location evidence="1">Cytoplasm</location>
    </subcellularLocation>
</comment>
<comment type="similarity">
    <text evidence="1">Belongs to the peptidase S51 family.</text>
</comment>
<comment type="sequence caution" evidence="2">
    <conflict type="erroneous initiation">
        <sequence resource="EMBL-CDS" id="AAK02538"/>
    </conflict>
</comment>
<gene>
    <name evidence="1" type="primary">pepE</name>
    <name type="ordered locus">PM0454</name>
</gene>
<name>PEPE_PASMU</name>